<protein>
    <recommendedName>
        <fullName evidence="8">Ammonia monooxygenase alpha subunit</fullName>
        <shortName evidence="8">AMO</shortName>
        <ecNumber evidence="4 13">1.14.99.39</ecNumber>
    </recommendedName>
    <alternativeName>
        <fullName evidence="9">Acetylene-binding polypeptide</fullName>
    </alternativeName>
    <alternativeName>
        <fullName evidence="8">Heterotrimeric Cu-heme enzyme</fullName>
    </alternativeName>
</protein>
<name>AMOA_NITEU</name>
<gene>
    <name evidence="9" type="primary">amoA1</name>
    <name evidence="9" type="synonym">amoA</name>
    <name type="ordered locus">NE0944</name>
</gene>
<gene>
    <name evidence="9" type="primary">amoA2</name>
    <name evidence="9" type="synonym">amoA</name>
    <name type="ordered locus">NE2063</name>
</gene>
<organism>
    <name type="scientific">Nitrosomonas europaea (strain ATCC 19718 / CIP 103999 / KCTC 2705 / NBRC 14298)</name>
    <dbReference type="NCBI Taxonomy" id="228410"/>
    <lineage>
        <taxon>Bacteria</taxon>
        <taxon>Pseudomonadati</taxon>
        <taxon>Pseudomonadota</taxon>
        <taxon>Betaproteobacteria</taxon>
        <taxon>Nitrosomonadales</taxon>
        <taxon>Nitrosomonadaceae</taxon>
        <taxon>Nitrosomonas</taxon>
    </lineage>
</organism>
<sequence>MSIFRTEEILKAAKMPPEAVHMSRLIDAVYFPILIILLVGTYHMHFMLLAGDWDFWMDWKDRQWWPVVTPIVGITYCSAIMYYLWVNYRQPFGATLCVVCLLIGEWLTRYWGFYWWSHYPINFVTPGIMLPGALMLDFTLYLTRNWLVTALVGGGFFGLLFYPGNWPIFGPTHLPIVVEGTLLSMADYMGHLYVRTGTPEYVRHIEQGSLRTFGGHTTVIAAFFSAFVSMLMFTVWWYLGKVYCTAFFYVKGKRGRIVHRNDVTAFGEEGFPEGIK</sequence>
<feature type="initiator methionine" description="Removed" evidence="6">
    <location>
        <position position="1"/>
    </location>
</feature>
<feature type="chain" id="PRO_0000064589" description="Ammonia monooxygenase alpha subunit">
    <location>
        <begin position="2"/>
        <end position="276"/>
    </location>
</feature>
<feature type="transmembrane region" description="Helical" evidence="1">
    <location>
        <begin position="29"/>
        <end position="49"/>
    </location>
</feature>
<feature type="transmembrane region" description="Helical" evidence="1">
    <location>
        <begin position="66"/>
        <end position="86"/>
    </location>
</feature>
<feature type="transmembrane region" description="Helical" evidence="1">
    <location>
        <begin position="96"/>
        <end position="116"/>
    </location>
</feature>
<feature type="transmembrane region" description="Helical" evidence="1">
    <location>
        <begin position="123"/>
        <end position="143"/>
    </location>
</feature>
<feature type="transmembrane region" description="Helical" evidence="1">
    <location>
        <begin position="150"/>
        <end position="170"/>
    </location>
</feature>
<feature type="transmembrane region" description="Helical" evidence="1">
    <location>
        <begin position="219"/>
        <end position="239"/>
    </location>
</feature>
<feature type="binding site" evidence="11">
    <location>
        <position position="187"/>
    </location>
    <ligand>
        <name>Cu(+)</name>
        <dbReference type="ChEBI" id="CHEBI:49552"/>
    </ligand>
</feature>
<feature type="binding site" evidence="11">
    <location>
        <position position="191"/>
    </location>
    <ligand>
        <name>Cu(+)</name>
        <dbReference type="ChEBI" id="CHEBI:49552"/>
    </ligand>
</feature>
<feature type="binding site" evidence="11">
    <location>
        <position position="204"/>
    </location>
    <ligand>
        <name>Cu(+)</name>
        <dbReference type="ChEBI" id="CHEBI:49552"/>
    </ligand>
</feature>
<evidence type="ECO:0000255" key="1"/>
<evidence type="ECO:0000269" key="2">
    <source>
    </source>
</evidence>
<evidence type="ECO:0000269" key="3">
    <source>
    </source>
</evidence>
<evidence type="ECO:0000269" key="4">
    <source>
    </source>
</evidence>
<evidence type="ECO:0000269" key="5">
    <source>
    </source>
</evidence>
<evidence type="ECO:0000269" key="6">
    <source>
    </source>
</evidence>
<evidence type="ECO:0000269" key="7">
    <source>
    </source>
</evidence>
<evidence type="ECO:0000303" key="8">
    <source>
    </source>
</evidence>
<evidence type="ECO:0000303" key="9">
    <source>
    </source>
</evidence>
<evidence type="ECO:0000305" key="10">
    <source>
    </source>
</evidence>
<evidence type="ECO:0000305" key="11">
    <source>
    </source>
</evidence>
<evidence type="ECO:0000305" key="12">
    <source>
    </source>
</evidence>
<evidence type="ECO:0000305" key="13">
    <source>
    </source>
</evidence>
<accession>Q04507</accession>
<dbReference type="EC" id="1.14.99.39" evidence="4 13"/>
<dbReference type="EMBL" id="L08050">
    <property type="protein sequence ID" value="AAA66194.1"/>
    <property type="molecule type" value="Genomic_DNA"/>
</dbReference>
<dbReference type="EMBL" id="AL954747">
    <property type="protein sequence ID" value="CAD84855.1"/>
    <property type="molecule type" value="Genomic_DNA"/>
</dbReference>
<dbReference type="EMBL" id="AL954747">
    <property type="protein sequence ID" value="CAD85974.1"/>
    <property type="molecule type" value="Genomic_DNA"/>
</dbReference>
<dbReference type="RefSeq" id="WP_011111553.1">
    <property type="nucleotide sequence ID" value="NC_004757.1"/>
</dbReference>
<dbReference type="PDB" id="9CL6">
    <property type="method" value="EM"/>
    <property type="resolution" value="2.77 A"/>
    <property type="chains" value="B/F/I=3-276"/>
</dbReference>
<dbReference type="PDBsum" id="9CL6"/>
<dbReference type="EMDB" id="EMD-45663"/>
<dbReference type="SMR" id="Q04507"/>
<dbReference type="STRING" id="228410.NE0944"/>
<dbReference type="GeneID" id="87105202"/>
<dbReference type="KEGG" id="neu:NE0944"/>
<dbReference type="KEGG" id="neu:NE2063"/>
<dbReference type="eggNOG" id="ENOG502Z9FM">
    <property type="taxonomic scope" value="Bacteria"/>
</dbReference>
<dbReference type="HOGENOM" id="CLU_1123603_0_0_4"/>
<dbReference type="BioCyc" id="MetaCyc:MONOMER-3741"/>
<dbReference type="BRENDA" id="1.14.99.39">
    <property type="organism ID" value="3654"/>
</dbReference>
<dbReference type="Proteomes" id="UP000001416">
    <property type="component" value="Chromosome"/>
</dbReference>
<dbReference type="GO" id="GO:0005737">
    <property type="term" value="C:cytoplasm"/>
    <property type="evidence" value="ECO:0007669"/>
    <property type="project" value="UniProtKB-SubCell"/>
</dbReference>
<dbReference type="GO" id="GO:0005886">
    <property type="term" value="C:plasma membrane"/>
    <property type="evidence" value="ECO:0007669"/>
    <property type="project" value="UniProtKB-SubCell"/>
</dbReference>
<dbReference type="GO" id="GO:0018597">
    <property type="term" value="F:ammonia monooxygenase activity"/>
    <property type="evidence" value="ECO:0007669"/>
    <property type="project" value="UniProtKB-EC"/>
</dbReference>
<dbReference type="GO" id="GO:0046872">
    <property type="term" value="F:metal ion binding"/>
    <property type="evidence" value="ECO:0007669"/>
    <property type="project" value="UniProtKB-KW"/>
</dbReference>
<dbReference type="GO" id="GO:0004497">
    <property type="term" value="F:monooxygenase activity"/>
    <property type="evidence" value="ECO:0000314"/>
    <property type="project" value="CACAO"/>
</dbReference>
<dbReference type="FunFam" id="1.20.1450.10:FF:000001">
    <property type="entry name" value="Particulate methane monooxygenase beta subunit"/>
    <property type="match status" value="1"/>
</dbReference>
<dbReference type="Gene3D" id="1.20.1450.10">
    <property type="entry name" value="Ammonia/particulate methane monooxygenase, subunit A"/>
    <property type="match status" value="1"/>
</dbReference>
<dbReference type="InterPro" id="IPR037001">
    <property type="entry name" value="NH3/CH4_mOase_suA_sf"/>
</dbReference>
<dbReference type="InterPro" id="IPR003393">
    <property type="entry name" value="NH3_CH4_mOase_A"/>
</dbReference>
<dbReference type="NCBIfam" id="NF041557">
    <property type="entry name" value="AmoA_BACT"/>
    <property type="match status" value="1"/>
</dbReference>
<dbReference type="NCBIfam" id="TIGR03080">
    <property type="entry name" value="CH4_NH3mon_ox_A"/>
    <property type="match status" value="1"/>
</dbReference>
<dbReference type="Pfam" id="PF02461">
    <property type="entry name" value="AMO"/>
    <property type="match status" value="1"/>
</dbReference>
<proteinExistence type="evidence at protein level"/>
<comment type="function">
    <text evidence="2 4 6 7 12">Part of the ammonia monooxygenase complex, which catalyzes the oxidation of ammonia to hydroxylamine, the first reaction in the process of ammonia oxidation to nitrite.</text>
</comment>
<comment type="catalytic activity">
    <reaction evidence="4 13">
        <text>AH2 + NH4(+) + O2 = hydroxylamine + A + H2O + H(+)</text>
        <dbReference type="Rhea" id="RHEA:27341"/>
        <dbReference type="ChEBI" id="CHEBI:13193"/>
        <dbReference type="ChEBI" id="CHEBI:15377"/>
        <dbReference type="ChEBI" id="CHEBI:15378"/>
        <dbReference type="ChEBI" id="CHEBI:15379"/>
        <dbReference type="ChEBI" id="CHEBI:15429"/>
        <dbReference type="ChEBI" id="CHEBI:17499"/>
        <dbReference type="ChEBI" id="CHEBI:28938"/>
        <dbReference type="EC" id="1.14.99.39"/>
    </reaction>
</comment>
<comment type="cofactor">
    <cofactor evidence="4 5 12">
        <name>Cu(+)</name>
        <dbReference type="ChEBI" id="CHEBI:49552"/>
    </cofactor>
    <text evidence="4 5">Binds 1 copper ion per subunit.</text>
</comment>
<comment type="activity regulation">
    <text evidence="3 4">In vitro, inhibited by acetylene (PubMed:19453274). In fact, acetylene is oxidized to ketene which binds irreversibly to His-191 of ammonia monooxygenase alpha subunit (AmoA) (PubMed:19118368).</text>
</comment>
<comment type="biophysicochemical properties">
    <kinetics>
        <text evidence="6">kcat is 20 sec(-1) for ammonia.</text>
    </kinetics>
</comment>
<comment type="subunit">
    <text evidence="4">The soluble ammonia monooxygenase is a nonamer composed of three alpha subunits (AmoA), three beta subunits (AmoB) and three gamma subunits (Cytochrome c1 PetC).</text>
</comment>
<comment type="subcellular location">
    <subcellularLocation>
        <location evidence="4">Cell membrane</location>
        <topology evidence="13">Multi-pass membrane protein</topology>
    </subcellularLocation>
    <subcellularLocation>
        <location evidence="4">Cytoplasm</location>
    </subcellularLocation>
    <text evidence="4">Ammonia monooxygenase is active and distributed approximately equally in both subcellular fractions.</text>
</comment>
<comment type="disruption phenotype">
    <text evidence="2 7">Cells lacking amoA1 grow more slowly than wild-type cells, while cells lacking amoA2 grow at rates similar to wild-type.</text>
</comment>
<comment type="miscellaneous">
    <text evidence="10">The physiological significance of the two gene copies is still unknown.</text>
</comment>
<reference key="1">
    <citation type="journal article" date="1993" name="J. Bacteriol.">
        <title>Sequence of the gene coding for ammonia monooxygenase in Nitrosomonas europaea.</title>
        <authorList>
            <person name="McTavish H.E."/>
            <person name="Fuchs J.A."/>
            <person name="Hooper A.B."/>
        </authorList>
    </citation>
    <scope>NUCLEOTIDE SEQUENCE [GENOMIC DNA]</scope>
    <scope>PROTEIN SEQUENCE OF 2-22</scope>
    <scope>FUNCTION</scope>
    <scope>CATALYTIC ACTIVITY</scope>
    <scope>BIOPHYSICOCHEMICAL PROPERTIES</scope>
    <scope>SUBCELLULAR LOCATION</scope>
    <source>
        <strain>ATCC 19718 / CIP 103999 / KCTC 2705 / NBRC 14298</strain>
    </source>
</reference>
<reference key="2">
    <citation type="journal article" date="2003" name="J. Bacteriol.">
        <title>Complete genome sequence of the ammonia-oxidizing bacterium and obligate chemolithoautotroph Nitrosomonas europaea.</title>
        <authorList>
            <person name="Chain P."/>
            <person name="Lamerdin J.E."/>
            <person name="Larimer F.W."/>
            <person name="Regala W."/>
            <person name="Lao V."/>
            <person name="Land M.L."/>
            <person name="Hauser L."/>
            <person name="Hooper A.B."/>
            <person name="Klotz M.G."/>
            <person name="Norton J."/>
            <person name="Sayavedra-Soto L.A."/>
            <person name="Arciero D.M."/>
            <person name="Hommes N.G."/>
            <person name="Whittaker M.M."/>
            <person name="Arp D.J."/>
        </authorList>
    </citation>
    <scope>NUCLEOTIDE SEQUENCE [LARGE SCALE GENOMIC DNA]</scope>
    <source>
        <strain>ATCC 19718 / CIP 103999 / KCTC 2705 / NBRC 14298</strain>
    </source>
</reference>
<reference key="3">
    <citation type="journal article" date="1993" name="J. Bacteriol.">
        <title>In vitro activation of ammonia monooxygenase from Nitrosomonas europaea by copper.</title>
        <authorList>
            <person name="Ensign S.A."/>
            <person name="Hyman M.R."/>
            <person name="Arp D.J."/>
        </authorList>
    </citation>
    <scope>FUNCTION</scope>
    <scope>COFACTOR</scope>
</reference>
<reference key="4">
    <citation type="journal article" date="1998" name="J. Bacteriol.">
        <title>Mutagenesis and expression of amo, which codes for ammonia monooxygenase in Nitrosomonas europaea.</title>
        <authorList>
            <person name="Hommes N.G."/>
            <person name="Sayavedra-Soto L.A."/>
            <person name="Arp D.J."/>
        </authorList>
    </citation>
    <scope>FUNCTION</scope>
    <scope>DISRUPTION PHENOTYPE</scope>
</reference>
<reference key="5">
    <citation type="journal article" date="2000" name="FEMS Microbiol. Lett.">
        <title>Differential regulation of amoA and amoB gene copies in Nitrosomonas europaea.</title>
        <authorList>
            <person name="Stein L.Y."/>
            <person name="Sayavedra-Soto L.A."/>
            <person name="Hommes N.G."/>
            <person name="Arp D.J."/>
        </authorList>
    </citation>
    <scope>FUNCTION</scope>
    <scope>DISRUPTION PHENOTYPE</scope>
</reference>
<reference key="6">
    <citation type="journal article" date="2009" name="Biol. Chem.">
        <title>A soluble form of ammonia monooxygenase in Nitrosomonas europaea.</title>
        <authorList>
            <person name="Gilch S."/>
            <person name="Meyer O."/>
            <person name="Schmidt I."/>
        </authorList>
    </citation>
    <scope>FUNCTION</scope>
    <scope>CATALYTIC ACTIVITY</scope>
    <scope>ACTIVITY REGULATION</scope>
    <scope>COFACTOR</scope>
    <scope>SUBCELLULAR LOCATION</scope>
    <scope>SUBUNIT</scope>
    <scope>IDENTIFICATION BY MASS SPECTROMETRY</scope>
    <source>
        <strain>ATCC 19718 / CIP 103999 / KCTC 2705 / NBRC 14298</strain>
    </source>
</reference>
<reference key="7">
    <citation type="journal article" date="2009" name="Microbiology">
        <title>Interaction of the mechanism-based inactivator acetylene with ammonia monooxygenase of Nitrosomonas europaea.</title>
        <authorList>
            <person name="Gilch S."/>
            <person name="Vogel M."/>
            <person name="Lorenz M.W."/>
            <person name="Meyer O."/>
            <person name="Schmidt I."/>
        </authorList>
    </citation>
    <scope>ACTIVITY REGULATION</scope>
    <source>
        <strain>ATCC 19718 / CIP 103999 / KCTC 2705 / NBRC 14298</strain>
    </source>
</reference>
<reference key="8">
    <citation type="journal article" date="2010" name="BioMetals">
        <title>Electron paramagnetic studies of the copper and iron containing soluble ammonia monooxygenase from Nitrosomonas europaea.</title>
        <authorList>
            <person name="Gilch S."/>
            <person name="Meyer O."/>
            <person name="Schmidt I."/>
        </authorList>
    </citation>
    <scope>COFACTOR</scope>
    <source>
        <strain>ATCC 19718 / CIP 103999 / KCTC 2705 / NBRC 14298</strain>
    </source>
</reference>
<keyword id="KW-0002">3D-structure</keyword>
<keyword id="KW-1003">Cell membrane</keyword>
<keyword id="KW-0186">Copper</keyword>
<keyword id="KW-0963">Cytoplasm</keyword>
<keyword id="KW-0903">Direct protein sequencing</keyword>
<keyword id="KW-0472">Membrane</keyword>
<keyword id="KW-0479">Metal-binding</keyword>
<keyword id="KW-0503">Monooxygenase</keyword>
<keyword id="KW-0560">Oxidoreductase</keyword>
<keyword id="KW-1185">Reference proteome</keyword>
<keyword id="KW-0812">Transmembrane</keyword>
<keyword id="KW-1133">Transmembrane helix</keyword>